<protein>
    <recommendedName>
        <fullName evidence="1">Transcription antitermination protein NusB</fullName>
    </recommendedName>
    <alternativeName>
        <fullName evidence="1">Antitermination factor NusB</fullName>
    </alternativeName>
</protein>
<proteinExistence type="inferred from homology"/>
<name>NUSB_SALNS</name>
<keyword id="KW-0694">RNA-binding</keyword>
<keyword id="KW-0804">Transcription</keyword>
<keyword id="KW-0889">Transcription antitermination</keyword>
<keyword id="KW-0805">Transcription regulation</keyword>
<sequence length="139" mass="15689">MKPAARRRARECAVQALYSWQLSQNDIADVEYQFLAEQDVKDVDVLYFRELLSGVATNSAYLDGLMKPYLSRLLEELGQVEKAVLRIALFELSKRSDVPYKVAINEAIELAKTFGAEDSHKFVNGVLDKAAPVIRPNKK</sequence>
<comment type="function">
    <text evidence="1">Involved in transcription antitermination. Required for transcription of ribosomal RNA (rRNA) genes. Binds specifically to the boxA antiterminator sequence of the ribosomal RNA (rrn) operons.</text>
</comment>
<comment type="similarity">
    <text evidence="1">Belongs to the NusB family.</text>
</comment>
<evidence type="ECO:0000255" key="1">
    <source>
        <dbReference type="HAMAP-Rule" id="MF_00073"/>
    </source>
</evidence>
<gene>
    <name evidence="1" type="primary">nusB</name>
    <name type="ordered locus">SNSL254_A0465</name>
</gene>
<dbReference type="EMBL" id="CP001113">
    <property type="protein sequence ID" value="ACF63888.1"/>
    <property type="molecule type" value="Genomic_DNA"/>
</dbReference>
<dbReference type="RefSeq" id="WP_000801129.1">
    <property type="nucleotide sequence ID" value="NZ_CCMR01000003.1"/>
</dbReference>
<dbReference type="SMR" id="B4SWR0"/>
<dbReference type="GeneID" id="89550189"/>
<dbReference type="KEGG" id="see:SNSL254_A0465"/>
<dbReference type="HOGENOM" id="CLU_087843_4_1_6"/>
<dbReference type="Proteomes" id="UP000008824">
    <property type="component" value="Chromosome"/>
</dbReference>
<dbReference type="GO" id="GO:0005829">
    <property type="term" value="C:cytosol"/>
    <property type="evidence" value="ECO:0007669"/>
    <property type="project" value="TreeGrafter"/>
</dbReference>
<dbReference type="GO" id="GO:0003723">
    <property type="term" value="F:RNA binding"/>
    <property type="evidence" value="ECO:0007669"/>
    <property type="project" value="UniProtKB-UniRule"/>
</dbReference>
<dbReference type="GO" id="GO:0006353">
    <property type="term" value="P:DNA-templated transcription termination"/>
    <property type="evidence" value="ECO:0007669"/>
    <property type="project" value="UniProtKB-UniRule"/>
</dbReference>
<dbReference type="GO" id="GO:0031564">
    <property type="term" value="P:transcription antitermination"/>
    <property type="evidence" value="ECO:0007669"/>
    <property type="project" value="UniProtKB-KW"/>
</dbReference>
<dbReference type="CDD" id="cd00619">
    <property type="entry name" value="Terminator_NusB"/>
    <property type="match status" value="1"/>
</dbReference>
<dbReference type="FunFam" id="1.10.940.10:FF:000001">
    <property type="entry name" value="Transcription antitermination factor NusB"/>
    <property type="match status" value="1"/>
</dbReference>
<dbReference type="Gene3D" id="1.10.940.10">
    <property type="entry name" value="NusB-like"/>
    <property type="match status" value="1"/>
</dbReference>
<dbReference type="HAMAP" id="MF_00073">
    <property type="entry name" value="NusB"/>
    <property type="match status" value="1"/>
</dbReference>
<dbReference type="InterPro" id="IPR035926">
    <property type="entry name" value="NusB-like_sf"/>
</dbReference>
<dbReference type="InterPro" id="IPR011605">
    <property type="entry name" value="NusB_fam"/>
</dbReference>
<dbReference type="InterPro" id="IPR006027">
    <property type="entry name" value="NusB_RsmB_TIM44"/>
</dbReference>
<dbReference type="NCBIfam" id="TIGR01951">
    <property type="entry name" value="nusB"/>
    <property type="match status" value="1"/>
</dbReference>
<dbReference type="PANTHER" id="PTHR11078:SF3">
    <property type="entry name" value="ANTITERMINATION NUSB DOMAIN-CONTAINING PROTEIN"/>
    <property type="match status" value="1"/>
</dbReference>
<dbReference type="PANTHER" id="PTHR11078">
    <property type="entry name" value="N UTILIZATION SUBSTANCE PROTEIN B-RELATED"/>
    <property type="match status" value="1"/>
</dbReference>
<dbReference type="Pfam" id="PF01029">
    <property type="entry name" value="NusB"/>
    <property type="match status" value="1"/>
</dbReference>
<dbReference type="SUPFAM" id="SSF48013">
    <property type="entry name" value="NusB-like"/>
    <property type="match status" value="1"/>
</dbReference>
<reference key="1">
    <citation type="journal article" date="2011" name="J. Bacteriol.">
        <title>Comparative genomics of 28 Salmonella enterica isolates: evidence for CRISPR-mediated adaptive sublineage evolution.</title>
        <authorList>
            <person name="Fricke W.F."/>
            <person name="Mammel M.K."/>
            <person name="McDermott P.F."/>
            <person name="Tartera C."/>
            <person name="White D.G."/>
            <person name="Leclerc J.E."/>
            <person name="Ravel J."/>
            <person name="Cebula T.A."/>
        </authorList>
    </citation>
    <scope>NUCLEOTIDE SEQUENCE [LARGE SCALE GENOMIC DNA]</scope>
    <source>
        <strain>SL254</strain>
    </source>
</reference>
<organism>
    <name type="scientific">Salmonella newport (strain SL254)</name>
    <dbReference type="NCBI Taxonomy" id="423368"/>
    <lineage>
        <taxon>Bacteria</taxon>
        <taxon>Pseudomonadati</taxon>
        <taxon>Pseudomonadota</taxon>
        <taxon>Gammaproteobacteria</taxon>
        <taxon>Enterobacterales</taxon>
        <taxon>Enterobacteriaceae</taxon>
        <taxon>Salmonella</taxon>
    </lineage>
</organism>
<accession>B4SWR0</accession>
<feature type="chain" id="PRO_1000092584" description="Transcription antitermination protein NusB">
    <location>
        <begin position="1"/>
        <end position="139"/>
    </location>
</feature>